<name>RL23_RHIME</name>
<keyword id="KW-1185">Reference proteome</keyword>
<keyword id="KW-0687">Ribonucleoprotein</keyword>
<keyword id="KW-0689">Ribosomal protein</keyword>
<keyword id="KW-0694">RNA-binding</keyword>
<keyword id="KW-0699">rRNA-binding</keyword>
<organism>
    <name type="scientific">Rhizobium meliloti (strain 1021)</name>
    <name type="common">Ensifer meliloti</name>
    <name type="synonym">Sinorhizobium meliloti</name>
    <dbReference type="NCBI Taxonomy" id="266834"/>
    <lineage>
        <taxon>Bacteria</taxon>
        <taxon>Pseudomonadati</taxon>
        <taxon>Pseudomonadota</taxon>
        <taxon>Alphaproteobacteria</taxon>
        <taxon>Hyphomicrobiales</taxon>
        <taxon>Rhizobiaceae</taxon>
        <taxon>Sinorhizobium/Ensifer group</taxon>
        <taxon>Sinorhizobium</taxon>
    </lineage>
</organism>
<dbReference type="EMBL" id="AL591688">
    <property type="protein sequence ID" value="CAC45937.1"/>
    <property type="molecule type" value="Genomic_DNA"/>
</dbReference>
<dbReference type="RefSeq" id="NP_385464.1">
    <property type="nucleotide sequence ID" value="NC_003047.1"/>
</dbReference>
<dbReference type="RefSeq" id="WP_003536621.1">
    <property type="nucleotide sequence ID" value="NC_003047.1"/>
</dbReference>
<dbReference type="SMR" id="Q92QG8"/>
<dbReference type="EnsemblBacteria" id="CAC45937">
    <property type="protein sequence ID" value="CAC45937"/>
    <property type="gene ID" value="SMc01307"/>
</dbReference>
<dbReference type="KEGG" id="sme:SMc01307"/>
<dbReference type="PATRIC" id="fig|266834.11.peg.2774"/>
<dbReference type="eggNOG" id="COG0089">
    <property type="taxonomic scope" value="Bacteria"/>
</dbReference>
<dbReference type="HOGENOM" id="CLU_037562_3_1_5"/>
<dbReference type="OrthoDB" id="9793353at2"/>
<dbReference type="Proteomes" id="UP000001976">
    <property type="component" value="Chromosome"/>
</dbReference>
<dbReference type="GO" id="GO:1990904">
    <property type="term" value="C:ribonucleoprotein complex"/>
    <property type="evidence" value="ECO:0007669"/>
    <property type="project" value="UniProtKB-KW"/>
</dbReference>
<dbReference type="GO" id="GO:0005840">
    <property type="term" value="C:ribosome"/>
    <property type="evidence" value="ECO:0007669"/>
    <property type="project" value="UniProtKB-KW"/>
</dbReference>
<dbReference type="GO" id="GO:0019843">
    <property type="term" value="F:rRNA binding"/>
    <property type="evidence" value="ECO:0007669"/>
    <property type="project" value="UniProtKB-UniRule"/>
</dbReference>
<dbReference type="GO" id="GO:0003735">
    <property type="term" value="F:structural constituent of ribosome"/>
    <property type="evidence" value="ECO:0007669"/>
    <property type="project" value="InterPro"/>
</dbReference>
<dbReference type="GO" id="GO:0006412">
    <property type="term" value="P:translation"/>
    <property type="evidence" value="ECO:0007669"/>
    <property type="project" value="UniProtKB-UniRule"/>
</dbReference>
<dbReference type="FunFam" id="3.30.70.330:FF:000001">
    <property type="entry name" value="50S ribosomal protein L23"/>
    <property type="match status" value="1"/>
</dbReference>
<dbReference type="Gene3D" id="3.30.70.330">
    <property type="match status" value="1"/>
</dbReference>
<dbReference type="HAMAP" id="MF_01369_B">
    <property type="entry name" value="Ribosomal_uL23_B"/>
    <property type="match status" value="1"/>
</dbReference>
<dbReference type="InterPro" id="IPR012677">
    <property type="entry name" value="Nucleotide-bd_a/b_plait_sf"/>
</dbReference>
<dbReference type="InterPro" id="IPR013025">
    <property type="entry name" value="Ribosomal_uL23-like"/>
</dbReference>
<dbReference type="InterPro" id="IPR012678">
    <property type="entry name" value="Ribosomal_uL23/eL15/eS24_sf"/>
</dbReference>
<dbReference type="NCBIfam" id="NF004359">
    <property type="entry name" value="PRK05738.1-3"/>
    <property type="match status" value="1"/>
</dbReference>
<dbReference type="NCBIfam" id="NF004360">
    <property type="entry name" value="PRK05738.1-5"/>
    <property type="match status" value="1"/>
</dbReference>
<dbReference type="NCBIfam" id="NF004363">
    <property type="entry name" value="PRK05738.2-4"/>
    <property type="match status" value="1"/>
</dbReference>
<dbReference type="PANTHER" id="PTHR11620">
    <property type="entry name" value="60S RIBOSOMAL PROTEIN L23A"/>
    <property type="match status" value="1"/>
</dbReference>
<dbReference type="Pfam" id="PF00276">
    <property type="entry name" value="Ribosomal_L23"/>
    <property type="match status" value="1"/>
</dbReference>
<dbReference type="SUPFAM" id="SSF54189">
    <property type="entry name" value="Ribosomal proteins S24e, L23 and L15e"/>
    <property type="match status" value="1"/>
</dbReference>
<protein>
    <recommendedName>
        <fullName evidence="1">Large ribosomal subunit protein uL23</fullName>
    </recommendedName>
    <alternativeName>
        <fullName evidence="2">50S ribosomal protein L23</fullName>
    </alternativeName>
</protein>
<accession>Q92QG8</accession>
<sequence>MTDLRHYDVIVSPSITEKSTLVSEQNQVVFNVAKGASKPEIKAAVEALFGVKVTAVNTLVRKGKLKRFRGFAGKQKDVKKAIVTLADGQSIDVSTGL</sequence>
<reference key="1">
    <citation type="journal article" date="2001" name="Proc. Natl. Acad. Sci. U.S.A.">
        <title>Analysis of the chromosome sequence of the legume symbiont Sinorhizobium meliloti strain 1021.</title>
        <authorList>
            <person name="Capela D."/>
            <person name="Barloy-Hubler F."/>
            <person name="Gouzy J."/>
            <person name="Bothe G."/>
            <person name="Ampe F."/>
            <person name="Batut J."/>
            <person name="Boistard P."/>
            <person name="Becker A."/>
            <person name="Boutry M."/>
            <person name="Cadieu E."/>
            <person name="Dreano S."/>
            <person name="Gloux S."/>
            <person name="Godrie T."/>
            <person name="Goffeau A."/>
            <person name="Kahn D."/>
            <person name="Kiss E."/>
            <person name="Lelaure V."/>
            <person name="Masuy D."/>
            <person name="Pohl T."/>
            <person name="Portetelle D."/>
            <person name="Puehler A."/>
            <person name="Purnelle B."/>
            <person name="Ramsperger U."/>
            <person name="Renard C."/>
            <person name="Thebault P."/>
            <person name="Vandenbol M."/>
            <person name="Weidner S."/>
            <person name="Galibert F."/>
        </authorList>
    </citation>
    <scope>NUCLEOTIDE SEQUENCE [LARGE SCALE GENOMIC DNA]</scope>
    <source>
        <strain>1021</strain>
    </source>
</reference>
<reference key="2">
    <citation type="journal article" date="2001" name="Science">
        <title>The composite genome of the legume symbiont Sinorhizobium meliloti.</title>
        <authorList>
            <person name="Galibert F."/>
            <person name="Finan T.M."/>
            <person name="Long S.R."/>
            <person name="Puehler A."/>
            <person name="Abola P."/>
            <person name="Ampe F."/>
            <person name="Barloy-Hubler F."/>
            <person name="Barnett M.J."/>
            <person name="Becker A."/>
            <person name="Boistard P."/>
            <person name="Bothe G."/>
            <person name="Boutry M."/>
            <person name="Bowser L."/>
            <person name="Buhrmester J."/>
            <person name="Cadieu E."/>
            <person name="Capela D."/>
            <person name="Chain P."/>
            <person name="Cowie A."/>
            <person name="Davis R.W."/>
            <person name="Dreano S."/>
            <person name="Federspiel N.A."/>
            <person name="Fisher R.F."/>
            <person name="Gloux S."/>
            <person name="Godrie T."/>
            <person name="Goffeau A."/>
            <person name="Golding B."/>
            <person name="Gouzy J."/>
            <person name="Gurjal M."/>
            <person name="Hernandez-Lucas I."/>
            <person name="Hong A."/>
            <person name="Huizar L."/>
            <person name="Hyman R.W."/>
            <person name="Jones T."/>
            <person name="Kahn D."/>
            <person name="Kahn M.L."/>
            <person name="Kalman S."/>
            <person name="Keating D.H."/>
            <person name="Kiss E."/>
            <person name="Komp C."/>
            <person name="Lelaure V."/>
            <person name="Masuy D."/>
            <person name="Palm C."/>
            <person name="Peck M.C."/>
            <person name="Pohl T.M."/>
            <person name="Portetelle D."/>
            <person name="Purnelle B."/>
            <person name="Ramsperger U."/>
            <person name="Surzycki R."/>
            <person name="Thebault P."/>
            <person name="Vandenbol M."/>
            <person name="Vorhoelter F.J."/>
            <person name="Weidner S."/>
            <person name="Wells D.H."/>
            <person name="Wong K."/>
            <person name="Yeh K.-C."/>
            <person name="Batut J."/>
        </authorList>
    </citation>
    <scope>NUCLEOTIDE SEQUENCE [LARGE SCALE GENOMIC DNA]</scope>
    <source>
        <strain>1021</strain>
    </source>
</reference>
<evidence type="ECO:0000255" key="1">
    <source>
        <dbReference type="HAMAP-Rule" id="MF_01369"/>
    </source>
</evidence>
<evidence type="ECO:0000305" key="2"/>
<proteinExistence type="inferred from homology"/>
<comment type="function">
    <text evidence="1">One of the early assembly proteins it binds 23S rRNA. One of the proteins that surrounds the polypeptide exit tunnel on the outside of the ribosome. Forms the main docking site for trigger factor binding to the ribosome.</text>
</comment>
<comment type="subunit">
    <text evidence="1">Part of the 50S ribosomal subunit. Contacts protein L29, and trigger factor when it is bound to the ribosome.</text>
</comment>
<comment type="similarity">
    <text evidence="1">Belongs to the universal ribosomal protein uL23 family.</text>
</comment>
<feature type="chain" id="PRO_0000272820" description="Large ribosomal subunit protein uL23">
    <location>
        <begin position="1"/>
        <end position="97"/>
    </location>
</feature>
<gene>
    <name evidence="1" type="primary">rplW</name>
    <name type="ordered locus">R01358</name>
    <name type="ORF">SMc01307</name>
</gene>